<organism>
    <name type="scientific">Clostridium botulinum (strain Kyoto / Type A2)</name>
    <dbReference type="NCBI Taxonomy" id="536232"/>
    <lineage>
        <taxon>Bacteria</taxon>
        <taxon>Bacillati</taxon>
        <taxon>Bacillota</taxon>
        <taxon>Clostridia</taxon>
        <taxon>Eubacteriales</taxon>
        <taxon>Clostridiaceae</taxon>
        <taxon>Clostridium</taxon>
    </lineage>
</organism>
<proteinExistence type="inferred from homology"/>
<gene>
    <name evidence="1" type="primary">rpsJ</name>
    <name type="ordered locus">CLM_3949</name>
</gene>
<name>RS10_CLOBJ</name>
<comment type="function">
    <text evidence="1">Involved in the binding of tRNA to the ribosomes.</text>
</comment>
<comment type="subunit">
    <text evidence="1">Part of the 30S ribosomal subunit.</text>
</comment>
<comment type="similarity">
    <text evidence="1">Belongs to the universal ribosomal protein uS10 family.</text>
</comment>
<evidence type="ECO:0000255" key="1">
    <source>
        <dbReference type="HAMAP-Rule" id="MF_00508"/>
    </source>
</evidence>
<evidence type="ECO:0000305" key="2"/>
<sequence length="102" mass="11434">MAKQKIRIRLKAFDHSLLDQSALKIVETAKTTGAKVAGPVPLPTEKDIVTILRAPHKYKDAREQFEIRTHKRLIDIISPSPKTVDALMRLDLPAGVDIEIKL</sequence>
<protein>
    <recommendedName>
        <fullName evidence="1">Small ribosomal subunit protein uS10</fullName>
    </recommendedName>
    <alternativeName>
        <fullName evidence="2">30S ribosomal protein S10</fullName>
    </alternativeName>
</protein>
<reference key="1">
    <citation type="submission" date="2008-10" db="EMBL/GenBank/DDBJ databases">
        <title>Genome sequence of Clostridium botulinum A2 Kyoto.</title>
        <authorList>
            <person name="Shrivastava S."/>
            <person name="Brinkac L.M."/>
            <person name="Brown J.L."/>
            <person name="Bruce D."/>
            <person name="Detter C.C."/>
            <person name="Johnson E.A."/>
            <person name="Munk C.A."/>
            <person name="Smith L.A."/>
            <person name="Smith T.J."/>
            <person name="Sutton G."/>
            <person name="Brettin T.S."/>
        </authorList>
    </citation>
    <scope>NUCLEOTIDE SEQUENCE [LARGE SCALE GENOMIC DNA]</scope>
    <source>
        <strain>Kyoto / Type A2</strain>
    </source>
</reference>
<dbReference type="EMBL" id="CP001581">
    <property type="protein sequence ID" value="ACO83719.1"/>
    <property type="molecule type" value="Genomic_DNA"/>
</dbReference>
<dbReference type="RefSeq" id="WP_003357250.1">
    <property type="nucleotide sequence ID" value="NC_012563.1"/>
</dbReference>
<dbReference type="SMR" id="C1FMV2"/>
<dbReference type="GeneID" id="92940251"/>
<dbReference type="KEGG" id="cby:CLM_3949"/>
<dbReference type="eggNOG" id="COG0051">
    <property type="taxonomic scope" value="Bacteria"/>
</dbReference>
<dbReference type="HOGENOM" id="CLU_122625_1_3_9"/>
<dbReference type="Proteomes" id="UP000001374">
    <property type="component" value="Chromosome"/>
</dbReference>
<dbReference type="GO" id="GO:1990904">
    <property type="term" value="C:ribonucleoprotein complex"/>
    <property type="evidence" value="ECO:0007669"/>
    <property type="project" value="UniProtKB-KW"/>
</dbReference>
<dbReference type="GO" id="GO:0005840">
    <property type="term" value="C:ribosome"/>
    <property type="evidence" value="ECO:0007669"/>
    <property type="project" value="UniProtKB-KW"/>
</dbReference>
<dbReference type="GO" id="GO:0003735">
    <property type="term" value="F:structural constituent of ribosome"/>
    <property type="evidence" value="ECO:0007669"/>
    <property type="project" value="InterPro"/>
</dbReference>
<dbReference type="GO" id="GO:0000049">
    <property type="term" value="F:tRNA binding"/>
    <property type="evidence" value="ECO:0007669"/>
    <property type="project" value="UniProtKB-UniRule"/>
</dbReference>
<dbReference type="GO" id="GO:0006412">
    <property type="term" value="P:translation"/>
    <property type="evidence" value="ECO:0007669"/>
    <property type="project" value="UniProtKB-UniRule"/>
</dbReference>
<dbReference type="FunFam" id="3.30.70.600:FF:000001">
    <property type="entry name" value="30S ribosomal protein S10"/>
    <property type="match status" value="1"/>
</dbReference>
<dbReference type="Gene3D" id="3.30.70.600">
    <property type="entry name" value="Ribosomal protein S10 domain"/>
    <property type="match status" value="1"/>
</dbReference>
<dbReference type="HAMAP" id="MF_00508">
    <property type="entry name" value="Ribosomal_uS10"/>
    <property type="match status" value="1"/>
</dbReference>
<dbReference type="InterPro" id="IPR001848">
    <property type="entry name" value="Ribosomal_uS10"/>
</dbReference>
<dbReference type="InterPro" id="IPR018268">
    <property type="entry name" value="Ribosomal_uS10_CS"/>
</dbReference>
<dbReference type="InterPro" id="IPR027486">
    <property type="entry name" value="Ribosomal_uS10_dom"/>
</dbReference>
<dbReference type="InterPro" id="IPR036838">
    <property type="entry name" value="Ribosomal_uS10_dom_sf"/>
</dbReference>
<dbReference type="NCBIfam" id="NF001861">
    <property type="entry name" value="PRK00596.1"/>
    <property type="match status" value="1"/>
</dbReference>
<dbReference type="NCBIfam" id="TIGR01049">
    <property type="entry name" value="rpsJ_bact"/>
    <property type="match status" value="1"/>
</dbReference>
<dbReference type="PANTHER" id="PTHR11700">
    <property type="entry name" value="30S RIBOSOMAL PROTEIN S10 FAMILY MEMBER"/>
    <property type="match status" value="1"/>
</dbReference>
<dbReference type="Pfam" id="PF00338">
    <property type="entry name" value="Ribosomal_S10"/>
    <property type="match status" value="1"/>
</dbReference>
<dbReference type="PRINTS" id="PR00971">
    <property type="entry name" value="RIBOSOMALS10"/>
</dbReference>
<dbReference type="SMART" id="SM01403">
    <property type="entry name" value="Ribosomal_S10"/>
    <property type="match status" value="1"/>
</dbReference>
<dbReference type="SUPFAM" id="SSF54999">
    <property type="entry name" value="Ribosomal protein S10"/>
    <property type="match status" value="1"/>
</dbReference>
<dbReference type="PROSITE" id="PS00361">
    <property type="entry name" value="RIBOSOMAL_S10"/>
    <property type="match status" value="1"/>
</dbReference>
<accession>C1FMV2</accession>
<keyword id="KW-0687">Ribonucleoprotein</keyword>
<keyword id="KW-0689">Ribosomal protein</keyword>
<feature type="chain" id="PRO_1000196299" description="Small ribosomal subunit protein uS10">
    <location>
        <begin position="1"/>
        <end position="102"/>
    </location>
</feature>